<protein>
    <recommendedName>
        <fullName>Uncharacterized protein VP9</fullName>
    </recommendedName>
</protein>
<feature type="chain" id="PRO_0000403283" description="Uncharacterized protein VP9">
    <location>
        <begin position="1"/>
        <end position="278"/>
    </location>
</feature>
<feature type="region of interest" description="Disordered" evidence="1">
    <location>
        <begin position="251"/>
        <end position="278"/>
    </location>
</feature>
<sequence length="278" mass="32181">MNSQKVQALTTVSKLSPIDKVVKGRNIPFSMPGDRVIMLKISSLFKFGREDKESDSKFDLVPTDCGICMVKTQLNQDEQKRTTFNDGKVIEIITYEQMKDILPMIKQAIHEFYSWRRGLMDTSTLEARNEWKPVSQLDFRRCNSNLIFYISILILSEYIIEIPIEYLTVSYGGYNFNNIRTGEWFNTDDFNNYQKVIKSGDVCDLFLINDTGEYKYINAITHVTKTNMIFSFNMQVSRPPQLNTTMKVRQTLSENKKQKSSSTSPETDSDMSEFFGDN</sequence>
<keyword id="KW-1185">Reference proteome</keyword>
<dbReference type="EMBL" id="DQ087284">
    <property type="protein sequence ID" value="AAZ94076.1"/>
    <property type="molecule type" value="Genomic_RNA"/>
</dbReference>
<dbReference type="RefSeq" id="YP_443943.1">
    <property type="nucleotide sequence ID" value="NC_007674.1"/>
</dbReference>
<dbReference type="KEGG" id="vg:5076696"/>
<dbReference type="Proteomes" id="UP000001676">
    <property type="component" value="Genome"/>
</dbReference>
<name>VP9_APRVF</name>
<organism>
    <name type="scientific">Aedes pseudoscutellaris reovirus (isolate France)</name>
    <name type="common">ApRV</name>
    <dbReference type="NCBI Taxonomy" id="648170"/>
    <lineage>
        <taxon>Viruses</taxon>
        <taxon>Riboviria</taxon>
        <taxon>Orthornavirae</taxon>
        <taxon>Duplornaviricota</taxon>
        <taxon>Resentoviricetes</taxon>
        <taxon>Reovirales</taxon>
        <taxon>Spinareoviridae</taxon>
        <taxon>Dinovernavirus</taxon>
        <taxon>Aedes pseudoscutellaris reovirus</taxon>
    </lineage>
</organism>
<organismHost>
    <name type="scientific">Aedes pseudoscutellaris</name>
    <name type="common">Mosquito</name>
    <name type="synonym">Stegomyia pseudoscutellaris</name>
    <dbReference type="NCBI Taxonomy" id="316597"/>
</organismHost>
<gene>
    <name type="primary">S9</name>
</gene>
<accession>Q2Y0E2</accession>
<evidence type="ECO:0000256" key="1">
    <source>
        <dbReference type="SAM" id="MobiDB-lite"/>
    </source>
</evidence>
<proteinExistence type="predicted"/>
<reference key="1">
    <citation type="journal article" date="2005" name="Virology">
        <title>Expansion of family Reoviridae to include nine-segmented dsRNA viruses: isolation and characterization of a new virus designated Aedes pseudoscutellaris reovirus assigned to a proposed genus (Dinovernavirus).</title>
        <authorList>
            <person name="Attoui H."/>
            <person name="Mohd Jaafar F."/>
            <person name="Belhouchet M."/>
            <person name="Biagini P."/>
            <person name="Cantaloube J.F."/>
            <person name="de Micco P."/>
            <person name="de Lamballerie X."/>
        </authorList>
    </citation>
    <scope>NUCLEOTIDE SEQUENCE [GENOMIC RNA]</scope>
</reference>